<protein>
    <recommendedName>
        <fullName evidence="1">Large ribosomal subunit protein bL31B</fullName>
    </recommendedName>
    <alternativeName>
        <fullName evidence="2">50S ribosomal protein L31 type B</fullName>
    </alternativeName>
</protein>
<feature type="chain" id="PRO_0000173210" description="Large ribosomal subunit protein bL31B">
    <location>
        <begin position="1"/>
        <end position="88"/>
    </location>
</feature>
<dbReference type="EMBL" id="BX640428">
    <property type="protein sequence ID" value="CAE37148.1"/>
    <property type="molecule type" value="Genomic_DNA"/>
</dbReference>
<dbReference type="RefSeq" id="WP_003810513.1">
    <property type="nucleotide sequence ID" value="NC_002928.3"/>
</dbReference>
<dbReference type="SMR" id="Q7W9B8"/>
<dbReference type="KEGG" id="bpa:BPP1847"/>
<dbReference type="HOGENOM" id="CLU_114306_2_1_4"/>
<dbReference type="Proteomes" id="UP000001421">
    <property type="component" value="Chromosome"/>
</dbReference>
<dbReference type="GO" id="GO:1990904">
    <property type="term" value="C:ribonucleoprotein complex"/>
    <property type="evidence" value="ECO:0007669"/>
    <property type="project" value="UniProtKB-KW"/>
</dbReference>
<dbReference type="GO" id="GO:0005840">
    <property type="term" value="C:ribosome"/>
    <property type="evidence" value="ECO:0007669"/>
    <property type="project" value="UniProtKB-KW"/>
</dbReference>
<dbReference type="GO" id="GO:0003735">
    <property type="term" value="F:structural constituent of ribosome"/>
    <property type="evidence" value="ECO:0007669"/>
    <property type="project" value="InterPro"/>
</dbReference>
<dbReference type="GO" id="GO:0006412">
    <property type="term" value="P:translation"/>
    <property type="evidence" value="ECO:0007669"/>
    <property type="project" value="UniProtKB-UniRule"/>
</dbReference>
<dbReference type="Gene3D" id="4.10.830.30">
    <property type="entry name" value="Ribosomal protein L31"/>
    <property type="match status" value="1"/>
</dbReference>
<dbReference type="HAMAP" id="MF_00502">
    <property type="entry name" value="Ribosomal_bL31_2"/>
    <property type="match status" value="1"/>
</dbReference>
<dbReference type="InterPro" id="IPR034704">
    <property type="entry name" value="Ribosomal_bL28/bL31-like_sf"/>
</dbReference>
<dbReference type="InterPro" id="IPR002150">
    <property type="entry name" value="Ribosomal_bL31"/>
</dbReference>
<dbReference type="InterPro" id="IPR027493">
    <property type="entry name" value="Ribosomal_bL31_B"/>
</dbReference>
<dbReference type="InterPro" id="IPR042105">
    <property type="entry name" value="Ribosomal_bL31_sf"/>
</dbReference>
<dbReference type="NCBIfam" id="TIGR00105">
    <property type="entry name" value="L31"/>
    <property type="match status" value="1"/>
</dbReference>
<dbReference type="NCBIfam" id="NF002462">
    <property type="entry name" value="PRK01678.1"/>
    <property type="match status" value="1"/>
</dbReference>
<dbReference type="PANTHER" id="PTHR33280">
    <property type="entry name" value="50S RIBOSOMAL PROTEIN L31, CHLOROPLASTIC"/>
    <property type="match status" value="1"/>
</dbReference>
<dbReference type="PANTHER" id="PTHR33280:SF1">
    <property type="entry name" value="LARGE RIBOSOMAL SUBUNIT PROTEIN BL31C"/>
    <property type="match status" value="1"/>
</dbReference>
<dbReference type="Pfam" id="PF01197">
    <property type="entry name" value="Ribosomal_L31"/>
    <property type="match status" value="1"/>
</dbReference>
<dbReference type="PRINTS" id="PR01249">
    <property type="entry name" value="RIBOSOMALL31"/>
</dbReference>
<dbReference type="SUPFAM" id="SSF143800">
    <property type="entry name" value="L28p-like"/>
    <property type="match status" value="1"/>
</dbReference>
<dbReference type="PROSITE" id="PS01143">
    <property type="entry name" value="RIBOSOMAL_L31"/>
    <property type="match status" value="1"/>
</dbReference>
<accession>Q7W9B8</accession>
<sequence>MKEGIHPEYREVVFMDVQTGNKFITRSTIHTRETVEMDGKTYPLFKCDVTSESHPFYTGAQTRIVETGRVEKFRARFARTAGTVKSAS</sequence>
<proteinExistence type="inferred from homology"/>
<gene>
    <name evidence="1" type="primary">rpmE2</name>
    <name type="ordered locus">BPP1847</name>
</gene>
<comment type="subunit">
    <text evidence="1">Part of the 50S ribosomal subunit.</text>
</comment>
<comment type="similarity">
    <text evidence="1">Belongs to the bacterial ribosomal protein bL31 family. Type B subfamily.</text>
</comment>
<name>RL31B_BORPA</name>
<evidence type="ECO:0000255" key="1">
    <source>
        <dbReference type="HAMAP-Rule" id="MF_00502"/>
    </source>
</evidence>
<evidence type="ECO:0000305" key="2"/>
<keyword id="KW-0687">Ribonucleoprotein</keyword>
<keyword id="KW-0689">Ribosomal protein</keyword>
<reference key="1">
    <citation type="journal article" date="2003" name="Nat. Genet.">
        <title>Comparative analysis of the genome sequences of Bordetella pertussis, Bordetella parapertussis and Bordetella bronchiseptica.</title>
        <authorList>
            <person name="Parkhill J."/>
            <person name="Sebaihia M."/>
            <person name="Preston A."/>
            <person name="Murphy L.D."/>
            <person name="Thomson N.R."/>
            <person name="Harris D.E."/>
            <person name="Holden M.T.G."/>
            <person name="Churcher C.M."/>
            <person name="Bentley S.D."/>
            <person name="Mungall K.L."/>
            <person name="Cerdeno-Tarraga A.-M."/>
            <person name="Temple L."/>
            <person name="James K.D."/>
            <person name="Harris B."/>
            <person name="Quail M.A."/>
            <person name="Achtman M."/>
            <person name="Atkin R."/>
            <person name="Baker S."/>
            <person name="Basham D."/>
            <person name="Bason N."/>
            <person name="Cherevach I."/>
            <person name="Chillingworth T."/>
            <person name="Collins M."/>
            <person name="Cronin A."/>
            <person name="Davis P."/>
            <person name="Doggett J."/>
            <person name="Feltwell T."/>
            <person name="Goble A."/>
            <person name="Hamlin N."/>
            <person name="Hauser H."/>
            <person name="Holroyd S."/>
            <person name="Jagels K."/>
            <person name="Leather S."/>
            <person name="Moule S."/>
            <person name="Norberczak H."/>
            <person name="O'Neil S."/>
            <person name="Ormond D."/>
            <person name="Price C."/>
            <person name="Rabbinowitsch E."/>
            <person name="Rutter S."/>
            <person name="Sanders M."/>
            <person name="Saunders D."/>
            <person name="Seeger K."/>
            <person name="Sharp S."/>
            <person name="Simmonds M."/>
            <person name="Skelton J."/>
            <person name="Squares R."/>
            <person name="Squares S."/>
            <person name="Stevens K."/>
            <person name="Unwin L."/>
            <person name="Whitehead S."/>
            <person name="Barrell B.G."/>
            <person name="Maskell D.J."/>
        </authorList>
    </citation>
    <scope>NUCLEOTIDE SEQUENCE [LARGE SCALE GENOMIC DNA]</scope>
    <source>
        <strain>12822 / ATCC BAA-587 / NCTC 13253</strain>
    </source>
</reference>
<organism>
    <name type="scientific">Bordetella parapertussis (strain 12822 / ATCC BAA-587 / NCTC 13253)</name>
    <dbReference type="NCBI Taxonomy" id="257311"/>
    <lineage>
        <taxon>Bacteria</taxon>
        <taxon>Pseudomonadati</taxon>
        <taxon>Pseudomonadota</taxon>
        <taxon>Betaproteobacteria</taxon>
        <taxon>Burkholderiales</taxon>
        <taxon>Alcaligenaceae</taxon>
        <taxon>Bordetella</taxon>
    </lineage>
</organism>